<gene>
    <name evidence="1" type="primary">tpiA</name>
    <name type="ordered locus">BF3729</name>
</gene>
<proteinExistence type="inferred from homology"/>
<sequence>MRKNIVAGNWKMNKTLQEGIALAKELNEALANEKPNCDVIICTPFIHLASVTPLVDAAKIGVGAENCADKESGAYTGEVSAAMVASTGAKYVILGHSERRAYYGETVEILKDKVKLALANGLTPIFCIGEVLEEREANKQNEVVAAQLASVFDLSAEDFSKIVLAYEPVWAIGTGKTASPAQAQEIHAFIRSAVAEKYGKEIADNTSILYGGSCKPSNAKELFANPDVDGGLIGGAALKVADFKGIIDAFN</sequence>
<accession>Q5L923</accession>
<dbReference type="EC" id="5.3.1.1" evidence="1"/>
<dbReference type="EMBL" id="CR626927">
    <property type="protein sequence ID" value="CAH09409.1"/>
    <property type="molecule type" value="Genomic_DNA"/>
</dbReference>
<dbReference type="RefSeq" id="WP_005791115.1">
    <property type="nucleotide sequence ID" value="NZ_UFTH01000001.1"/>
</dbReference>
<dbReference type="SMR" id="Q5L923"/>
<dbReference type="PaxDb" id="272559-BF9343_3628"/>
<dbReference type="GeneID" id="92940720"/>
<dbReference type="KEGG" id="bfs:BF9343_3628"/>
<dbReference type="eggNOG" id="COG0149">
    <property type="taxonomic scope" value="Bacteria"/>
</dbReference>
<dbReference type="HOGENOM" id="CLU_024251_2_1_10"/>
<dbReference type="UniPathway" id="UPA00109">
    <property type="reaction ID" value="UER00189"/>
</dbReference>
<dbReference type="UniPathway" id="UPA00138"/>
<dbReference type="Proteomes" id="UP000006731">
    <property type="component" value="Chromosome"/>
</dbReference>
<dbReference type="GO" id="GO:0005829">
    <property type="term" value="C:cytosol"/>
    <property type="evidence" value="ECO:0007669"/>
    <property type="project" value="TreeGrafter"/>
</dbReference>
<dbReference type="GO" id="GO:0004807">
    <property type="term" value="F:triose-phosphate isomerase activity"/>
    <property type="evidence" value="ECO:0007669"/>
    <property type="project" value="UniProtKB-UniRule"/>
</dbReference>
<dbReference type="GO" id="GO:0006094">
    <property type="term" value="P:gluconeogenesis"/>
    <property type="evidence" value="ECO:0007669"/>
    <property type="project" value="UniProtKB-UniRule"/>
</dbReference>
<dbReference type="GO" id="GO:0046166">
    <property type="term" value="P:glyceraldehyde-3-phosphate biosynthetic process"/>
    <property type="evidence" value="ECO:0007669"/>
    <property type="project" value="TreeGrafter"/>
</dbReference>
<dbReference type="GO" id="GO:0019563">
    <property type="term" value="P:glycerol catabolic process"/>
    <property type="evidence" value="ECO:0007669"/>
    <property type="project" value="TreeGrafter"/>
</dbReference>
<dbReference type="GO" id="GO:0006096">
    <property type="term" value="P:glycolytic process"/>
    <property type="evidence" value="ECO:0007669"/>
    <property type="project" value="UniProtKB-UniRule"/>
</dbReference>
<dbReference type="CDD" id="cd00311">
    <property type="entry name" value="TIM"/>
    <property type="match status" value="1"/>
</dbReference>
<dbReference type="FunFam" id="3.20.20.70:FF:000016">
    <property type="entry name" value="Triosephosphate isomerase"/>
    <property type="match status" value="1"/>
</dbReference>
<dbReference type="Gene3D" id="3.20.20.70">
    <property type="entry name" value="Aldolase class I"/>
    <property type="match status" value="1"/>
</dbReference>
<dbReference type="HAMAP" id="MF_00147_B">
    <property type="entry name" value="TIM_B"/>
    <property type="match status" value="1"/>
</dbReference>
<dbReference type="InterPro" id="IPR013785">
    <property type="entry name" value="Aldolase_TIM"/>
</dbReference>
<dbReference type="InterPro" id="IPR035990">
    <property type="entry name" value="TIM_sf"/>
</dbReference>
<dbReference type="InterPro" id="IPR022896">
    <property type="entry name" value="TrioseP_Isoase_bac/euk"/>
</dbReference>
<dbReference type="InterPro" id="IPR000652">
    <property type="entry name" value="Triosephosphate_isomerase"/>
</dbReference>
<dbReference type="InterPro" id="IPR020861">
    <property type="entry name" value="Triosephosphate_isomerase_AS"/>
</dbReference>
<dbReference type="NCBIfam" id="TIGR00419">
    <property type="entry name" value="tim"/>
    <property type="match status" value="1"/>
</dbReference>
<dbReference type="PANTHER" id="PTHR21139">
    <property type="entry name" value="TRIOSEPHOSPHATE ISOMERASE"/>
    <property type="match status" value="1"/>
</dbReference>
<dbReference type="PANTHER" id="PTHR21139:SF42">
    <property type="entry name" value="TRIOSEPHOSPHATE ISOMERASE"/>
    <property type="match status" value="1"/>
</dbReference>
<dbReference type="Pfam" id="PF00121">
    <property type="entry name" value="TIM"/>
    <property type="match status" value="1"/>
</dbReference>
<dbReference type="SUPFAM" id="SSF51351">
    <property type="entry name" value="Triosephosphate isomerase (TIM)"/>
    <property type="match status" value="1"/>
</dbReference>
<dbReference type="PROSITE" id="PS00171">
    <property type="entry name" value="TIM_1"/>
    <property type="match status" value="1"/>
</dbReference>
<dbReference type="PROSITE" id="PS51440">
    <property type="entry name" value="TIM_2"/>
    <property type="match status" value="1"/>
</dbReference>
<feature type="chain" id="PRO_0000307431" description="Triosephosphate isomerase">
    <location>
        <begin position="1"/>
        <end position="251"/>
    </location>
</feature>
<feature type="active site" description="Electrophile" evidence="1">
    <location>
        <position position="96"/>
    </location>
</feature>
<feature type="active site" description="Proton acceptor" evidence="1">
    <location>
        <position position="167"/>
    </location>
</feature>
<feature type="binding site" evidence="1">
    <location>
        <begin position="9"/>
        <end position="11"/>
    </location>
    <ligand>
        <name>substrate</name>
    </ligand>
</feature>
<feature type="binding site" evidence="1">
    <location>
        <position position="173"/>
    </location>
    <ligand>
        <name>substrate</name>
    </ligand>
</feature>
<feature type="binding site" evidence="1">
    <location>
        <position position="213"/>
    </location>
    <ligand>
        <name>substrate</name>
    </ligand>
</feature>
<feature type="binding site" evidence="1">
    <location>
        <begin position="234"/>
        <end position="235"/>
    </location>
    <ligand>
        <name>substrate</name>
    </ligand>
</feature>
<evidence type="ECO:0000255" key="1">
    <source>
        <dbReference type="HAMAP-Rule" id="MF_00147"/>
    </source>
</evidence>
<protein>
    <recommendedName>
        <fullName evidence="1">Triosephosphate isomerase</fullName>
        <shortName evidence="1">TIM</shortName>
        <shortName evidence="1">TPI</shortName>
        <ecNumber evidence="1">5.3.1.1</ecNumber>
    </recommendedName>
    <alternativeName>
        <fullName evidence="1">Triose-phosphate isomerase</fullName>
    </alternativeName>
</protein>
<name>TPIS_BACFN</name>
<reference key="1">
    <citation type="journal article" date="2005" name="Science">
        <title>Extensive DNA inversions in the B. fragilis genome control variable gene expression.</title>
        <authorList>
            <person name="Cerdeno-Tarraga A.-M."/>
            <person name="Patrick S."/>
            <person name="Crossman L.C."/>
            <person name="Blakely G."/>
            <person name="Abratt V."/>
            <person name="Lennard N."/>
            <person name="Poxton I."/>
            <person name="Duerden B."/>
            <person name="Harris B."/>
            <person name="Quail M.A."/>
            <person name="Barron A."/>
            <person name="Clark L."/>
            <person name="Corton C."/>
            <person name="Doggett J."/>
            <person name="Holden M.T.G."/>
            <person name="Larke N."/>
            <person name="Line A."/>
            <person name="Lord A."/>
            <person name="Norbertczak H."/>
            <person name="Ormond D."/>
            <person name="Price C."/>
            <person name="Rabbinowitsch E."/>
            <person name="Woodward J."/>
            <person name="Barrell B.G."/>
            <person name="Parkhill J."/>
        </authorList>
    </citation>
    <scope>NUCLEOTIDE SEQUENCE [LARGE SCALE GENOMIC DNA]</scope>
    <source>
        <strain>ATCC 25285 / DSM 2151 / CCUG 4856 / JCM 11019 / LMG 10263 / NCTC 9343 / Onslow / VPI 2553 / EN-2</strain>
    </source>
</reference>
<organism>
    <name type="scientific">Bacteroides fragilis (strain ATCC 25285 / DSM 2151 / CCUG 4856 / JCM 11019 / LMG 10263 / NCTC 9343 / Onslow / VPI 2553 / EN-2)</name>
    <dbReference type="NCBI Taxonomy" id="272559"/>
    <lineage>
        <taxon>Bacteria</taxon>
        <taxon>Pseudomonadati</taxon>
        <taxon>Bacteroidota</taxon>
        <taxon>Bacteroidia</taxon>
        <taxon>Bacteroidales</taxon>
        <taxon>Bacteroidaceae</taxon>
        <taxon>Bacteroides</taxon>
    </lineage>
</organism>
<comment type="function">
    <text evidence="1">Involved in the gluconeogenesis. Catalyzes stereospecifically the conversion of dihydroxyacetone phosphate (DHAP) to D-glyceraldehyde-3-phosphate (G3P).</text>
</comment>
<comment type="catalytic activity">
    <reaction evidence="1">
        <text>D-glyceraldehyde 3-phosphate = dihydroxyacetone phosphate</text>
        <dbReference type="Rhea" id="RHEA:18585"/>
        <dbReference type="ChEBI" id="CHEBI:57642"/>
        <dbReference type="ChEBI" id="CHEBI:59776"/>
        <dbReference type="EC" id="5.3.1.1"/>
    </reaction>
</comment>
<comment type="pathway">
    <text evidence="1">Carbohydrate biosynthesis; gluconeogenesis.</text>
</comment>
<comment type="pathway">
    <text evidence="1">Carbohydrate degradation; glycolysis; D-glyceraldehyde 3-phosphate from glycerone phosphate: step 1/1.</text>
</comment>
<comment type="subunit">
    <text evidence="1">Homodimer.</text>
</comment>
<comment type="subcellular location">
    <subcellularLocation>
        <location evidence="1">Cytoplasm</location>
    </subcellularLocation>
</comment>
<comment type="similarity">
    <text evidence="1">Belongs to the triosephosphate isomerase family.</text>
</comment>
<keyword id="KW-0963">Cytoplasm</keyword>
<keyword id="KW-0312">Gluconeogenesis</keyword>
<keyword id="KW-0324">Glycolysis</keyword>
<keyword id="KW-0413">Isomerase</keyword>